<evidence type="ECO:0000250" key="1"/>
<evidence type="ECO:0000250" key="2">
    <source>
        <dbReference type="UniProtKB" id="Q14764"/>
    </source>
</evidence>
<evidence type="ECO:0000256" key="3">
    <source>
        <dbReference type="SAM" id="MobiDB-lite"/>
    </source>
</evidence>
<protein>
    <recommendedName>
        <fullName>Major vault protein</fullName>
        <shortName>MVP</shortName>
    </recommendedName>
</protein>
<accession>Q3SYU9</accession>
<proteinExistence type="evidence at transcript level"/>
<dbReference type="EMBL" id="BC103371">
    <property type="protein sequence ID" value="AAI03372.1"/>
    <property type="molecule type" value="mRNA"/>
</dbReference>
<dbReference type="RefSeq" id="NP_001030394.1">
    <property type="nucleotide sequence ID" value="NM_001035317.2"/>
</dbReference>
<dbReference type="SMR" id="Q3SYU9"/>
<dbReference type="FunCoup" id="Q3SYU9">
    <property type="interactions" value="271"/>
</dbReference>
<dbReference type="STRING" id="9913.ENSBTAP00000010451"/>
<dbReference type="PaxDb" id="9913-ENSBTAP00000010451"/>
<dbReference type="PeptideAtlas" id="Q3SYU9"/>
<dbReference type="GeneID" id="516456"/>
<dbReference type="KEGG" id="bta:516456"/>
<dbReference type="CTD" id="9961"/>
<dbReference type="eggNOG" id="ENOG502QPP0">
    <property type="taxonomic scope" value="Eukaryota"/>
</dbReference>
<dbReference type="InParanoid" id="Q3SYU9"/>
<dbReference type="OrthoDB" id="6125719at2759"/>
<dbReference type="Proteomes" id="UP000009136">
    <property type="component" value="Unplaced"/>
</dbReference>
<dbReference type="GO" id="GO:0005737">
    <property type="term" value="C:cytoplasm"/>
    <property type="evidence" value="ECO:0000318"/>
    <property type="project" value="GO_Central"/>
</dbReference>
<dbReference type="GO" id="GO:0005634">
    <property type="term" value="C:nucleus"/>
    <property type="evidence" value="ECO:0000318"/>
    <property type="project" value="GO_Central"/>
</dbReference>
<dbReference type="GO" id="GO:1990904">
    <property type="term" value="C:ribonucleoprotein complex"/>
    <property type="evidence" value="ECO:0007669"/>
    <property type="project" value="UniProtKB-KW"/>
</dbReference>
<dbReference type="CDD" id="cd08825">
    <property type="entry name" value="MVP_shoulder"/>
    <property type="match status" value="1"/>
</dbReference>
<dbReference type="FunFam" id="2.30.30.550:FF:000002">
    <property type="entry name" value="Major vault protein"/>
    <property type="match status" value="1"/>
</dbReference>
<dbReference type="FunFam" id="2.30.30.560:FF:000002">
    <property type="entry name" value="Major vault protein-alpha"/>
    <property type="match status" value="1"/>
</dbReference>
<dbReference type="FunFam" id="2.30.30.570:FF:000002">
    <property type="entry name" value="Major vault protein-alpha"/>
    <property type="match status" value="1"/>
</dbReference>
<dbReference type="FunFam" id="2.30.30.550:FF:000001">
    <property type="entry name" value="major vault protein-like"/>
    <property type="match status" value="3"/>
</dbReference>
<dbReference type="FunFam" id="2.30.30.560:FF:000001">
    <property type="entry name" value="major vault protein-like"/>
    <property type="match status" value="1"/>
</dbReference>
<dbReference type="FunFam" id="2.30.30.570:FF:000001">
    <property type="entry name" value="major vault protein-like"/>
    <property type="match status" value="1"/>
</dbReference>
<dbReference type="FunFam" id="2.30.30.620:FF:000001">
    <property type="entry name" value="major vault protein-like"/>
    <property type="match status" value="1"/>
</dbReference>
<dbReference type="FunFam" id="3.30.479.30:FF:000010">
    <property type="entry name" value="major vault protein-like"/>
    <property type="match status" value="1"/>
</dbReference>
<dbReference type="Gene3D" id="2.30.30.560">
    <property type="match status" value="2"/>
</dbReference>
<dbReference type="Gene3D" id="2.30.30.570">
    <property type="match status" value="2"/>
</dbReference>
<dbReference type="Gene3D" id="2.30.30.620">
    <property type="match status" value="1"/>
</dbReference>
<dbReference type="Gene3D" id="6.10.250.720">
    <property type="match status" value="1"/>
</dbReference>
<dbReference type="Gene3D" id="6.20.380.10">
    <property type="match status" value="1"/>
</dbReference>
<dbReference type="Gene3D" id="3.30.479.30">
    <property type="entry name" value="Band 7 domain"/>
    <property type="match status" value="1"/>
</dbReference>
<dbReference type="Gene3D" id="2.30.30.550">
    <property type="entry name" value="Major Vault Protein repeat"/>
    <property type="match status" value="4"/>
</dbReference>
<dbReference type="InterPro" id="IPR036013">
    <property type="entry name" value="Band_7/SPFH_dom_sf"/>
</dbReference>
<dbReference type="InterPro" id="IPR039059">
    <property type="entry name" value="MVP"/>
</dbReference>
<dbReference type="InterPro" id="IPR041139">
    <property type="entry name" value="MVP_rep_dom"/>
</dbReference>
<dbReference type="InterPro" id="IPR043023">
    <property type="entry name" value="MVP_rep_sf"/>
</dbReference>
<dbReference type="InterPro" id="IPR021870">
    <property type="entry name" value="MVP_shoulder"/>
</dbReference>
<dbReference type="InterPro" id="IPR041134">
    <property type="entry name" value="Vault_2"/>
</dbReference>
<dbReference type="InterPro" id="IPR043179">
    <property type="entry name" value="Vault_2_sf"/>
</dbReference>
<dbReference type="InterPro" id="IPR040989">
    <property type="entry name" value="Vault_3"/>
</dbReference>
<dbReference type="InterPro" id="IPR041136">
    <property type="entry name" value="Vault_4"/>
</dbReference>
<dbReference type="InterPro" id="IPR002499">
    <property type="entry name" value="Vault_N"/>
</dbReference>
<dbReference type="PANTHER" id="PTHR14165">
    <property type="entry name" value="MAJOR VAULT PROTEIN"/>
    <property type="match status" value="1"/>
</dbReference>
<dbReference type="PANTHER" id="PTHR14165:SF3">
    <property type="entry name" value="MAJOR VAULT PROTEIN"/>
    <property type="match status" value="1"/>
</dbReference>
<dbReference type="Pfam" id="PF11978">
    <property type="entry name" value="MVP_shoulder"/>
    <property type="match status" value="1"/>
</dbReference>
<dbReference type="Pfam" id="PF01505">
    <property type="entry name" value="Vault"/>
    <property type="match status" value="4"/>
</dbReference>
<dbReference type="Pfam" id="PF17794">
    <property type="entry name" value="Vault_2"/>
    <property type="match status" value="2"/>
</dbReference>
<dbReference type="Pfam" id="PF17795">
    <property type="entry name" value="Vault_3"/>
    <property type="match status" value="1"/>
</dbReference>
<dbReference type="Pfam" id="PF17796">
    <property type="entry name" value="Vault_4"/>
    <property type="match status" value="1"/>
</dbReference>
<dbReference type="PROSITE" id="PS51224">
    <property type="entry name" value="MVP"/>
    <property type="match status" value="8"/>
</dbReference>
<organism>
    <name type="scientific">Bos taurus</name>
    <name type="common">Bovine</name>
    <dbReference type="NCBI Taxonomy" id="9913"/>
    <lineage>
        <taxon>Eukaryota</taxon>
        <taxon>Metazoa</taxon>
        <taxon>Chordata</taxon>
        <taxon>Craniata</taxon>
        <taxon>Vertebrata</taxon>
        <taxon>Euteleostomi</taxon>
        <taxon>Mammalia</taxon>
        <taxon>Eutheria</taxon>
        <taxon>Laurasiatheria</taxon>
        <taxon>Artiodactyla</taxon>
        <taxon>Ruminantia</taxon>
        <taxon>Pecora</taxon>
        <taxon>Bovidae</taxon>
        <taxon>Bovinae</taxon>
        <taxon>Bos</taxon>
    </lineage>
</organism>
<gene>
    <name type="primary">MVP</name>
</gene>
<sequence>MSMEESIIRIPPYHYIHVLDQNSNVSRVEVGPKTYIRQDNERILFAPVRMLTVPPRHYCMVANPVARDAQGTVLFDVTGQVRLRHADLEIRLAQDPFPLFPGEVLEKDITPLQVVLPNTALHLKALLDFEDKNGQKVVAGDEWLFEGPGTYIPQKEVEVIEIIQATVIKQNQALRLRARKECLDRDGKERVTGEEWLVRSVGAYLPAVFEEVLDVVDAVILTEKTALHLRARQNFRDVRGVTRRTGEEWLVTVQDTEAHVPDVYEEVMGVVSVTTLGPHNYCVILDPVGPDGKNQLGQKLVFKGEQSFFLQPGEKLERGIQNVYVLSEQQGLLLRALQPLEEGEGKEKVSHQAGDHWLIRGPLEYVPPAKVEVVEERQAIPLDENEGIYVQDVKTGRVRAVIGSTYMLTQDEVLWEKELPPGVEELLNKGQDPLADRGEKETSKTPKLSTPRNKTRVVSYRVPHNAAVQVYDYREKKARVVFGPELVLLGPEEQFTVLSLSAGRPKRPHARRTLCLLLGPDFFTDVITIETADHARLQLQLAYNWHFELSDRKDPQETAKLFSVPDFVGDACKAIASRVRGAVASVTFDDFHKNSARIIRTAVFGFETQETKGPDTMALPQPRDRAVFPQNGLVVSSVDVQSVEPVDQRTRDALQRSVQLAIEIATNSQEAAAKHEAQRLEQEARGRLERQKILDQSEAEKARRELLELEALSTAVESTGTAKAEAESRAEAARIEGEGAVLQAKLKAEALAIETEAELERVKKVRELELLYARAQLELEVSKAQQLAEVEVKKFKQMTEALGPSTIRDMAVAGPEMQVKLLQSLGLKSTLITDGSTPINLFNTALGLLGLGAEAQPPAKKPTGGPSVQEGLLPISTAAPLTLGNNQVVP</sequence>
<name>MVP_BOVIN</name>
<comment type="function">
    <text evidence="1">Required for normal vault structure. Vaults are multi-subunit structures that may act as scaffolds for proteins involved in signal transduction. Vaults may also play a role in nucleo-cytoplasmic transport. Down-regulates IFNG-mediated STAT1 signaling and subsequent activation of JAK. Down-regulates SRC activity and signaling through MAP kinases (By similarity).</text>
</comment>
<comment type="subunit">
    <text evidence="1">The vault ribonucleoprotein particle is a huge (400 A x 670 A) cage structure of 12.9 MDa. It consists of a dimer of half-vaults, with each half-vault comprising 39 identical major vault protein (MVP) chains, PARP4 and one or more vault RNAs (vRNAs). Interacts with TEP1. Interacts with PTEN and activated MAPK1. The phosphorylated protein interacts with the SH2 domains of PTPN11 and SRC. Interacts with APEX1. May interact with ZNF540 (By similarity).</text>
</comment>
<comment type="subcellular location">
    <subcellularLocation>
        <location evidence="2">Cytoplasm</location>
    </subcellularLocation>
    <subcellularLocation>
        <location evidence="2">Nucleus</location>
    </subcellularLocation>
</comment>
<comment type="domain">
    <text evidence="1">MVP 3 mediates interaction with PTEN.</text>
</comment>
<comment type="domain">
    <text evidence="1">MVP 4 mediates interaction with PARP4.</text>
</comment>
<comment type="PTM">
    <text evidence="1">Phosphorylated on Tyr residues after EGF stimulation.</text>
</comment>
<comment type="PTM">
    <text evidence="1">Dephosphorylated by PTPN11.</text>
</comment>
<feature type="chain" id="PRO_0000246782" description="Major vault protein">
    <location>
        <begin position="1"/>
        <end position="890"/>
    </location>
</feature>
<feature type="repeat" description="MVP 1">
    <location>
        <begin position="2"/>
        <end position="56"/>
    </location>
</feature>
<feature type="repeat" description="MVP 2">
    <location>
        <begin position="57"/>
        <end position="111"/>
    </location>
</feature>
<feature type="repeat" description="MVP 3">
    <location>
        <begin position="112"/>
        <end position="164"/>
    </location>
</feature>
<feature type="repeat" description="MVP 4">
    <location>
        <begin position="165"/>
        <end position="217"/>
    </location>
</feature>
<feature type="repeat" description="MVP 5">
    <location>
        <begin position="218"/>
        <end position="272"/>
    </location>
</feature>
<feature type="repeat" description="MVP 6">
    <location>
        <begin position="273"/>
        <end position="323"/>
    </location>
</feature>
<feature type="repeat" description="MVP 7">
    <location>
        <begin position="324"/>
        <end position="379"/>
    </location>
</feature>
<feature type="repeat" description="MVP 8">
    <location>
        <begin position="380"/>
        <end position="457"/>
    </location>
</feature>
<feature type="repeat" description="MVP 9">
    <location>
        <begin position="458"/>
        <end position="520"/>
    </location>
</feature>
<feature type="region of interest" description="Disordered" evidence="3">
    <location>
        <begin position="425"/>
        <end position="455"/>
    </location>
</feature>
<feature type="compositionally biased region" description="Basic and acidic residues" evidence="3">
    <location>
        <begin position="434"/>
        <end position="444"/>
    </location>
</feature>
<feature type="cross-link" description="Glycyl lysine isopeptide (Lys-Gly) (interchain with G-Cter in SUMO2)" evidence="2">
    <location>
        <position position="444"/>
    </location>
</feature>
<keyword id="KW-0963">Cytoplasm</keyword>
<keyword id="KW-1017">Isopeptide bond</keyword>
<keyword id="KW-0539">Nucleus</keyword>
<keyword id="KW-0597">Phosphoprotein</keyword>
<keyword id="KW-1185">Reference proteome</keyword>
<keyword id="KW-0677">Repeat</keyword>
<keyword id="KW-0687">Ribonucleoprotein</keyword>
<keyword id="KW-0832">Ubl conjugation</keyword>
<reference key="1">
    <citation type="submission" date="2005-08" db="EMBL/GenBank/DDBJ databases">
        <authorList>
            <consortium name="NIH - Mammalian Gene Collection (MGC) project"/>
        </authorList>
    </citation>
    <scope>NUCLEOTIDE SEQUENCE [LARGE SCALE MRNA]</scope>
    <source>
        <strain>Crossbred X Angus</strain>
        <tissue>Ileum</tissue>
    </source>
</reference>